<organism>
    <name type="scientific">Syntrophobacter fumaroxidans (strain DSM 10017 / MPOB)</name>
    <dbReference type="NCBI Taxonomy" id="335543"/>
    <lineage>
        <taxon>Bacteria</taxon>
        <taxon>Pseudomonadati</taxon>
        <taxon>Thermodesulfobacteriota</taxon>
        <taxon>Syntrophobacteria</taxon>
        <taxon>Syntrophobacterales</taxon>
        <taxon>Syntrophobacteraceae</taxon>
        <taxon>Syntrophobacter</taxon>
    </lineage>
</organism>
<gene>
    <name evidence="1" type="primary">nuoN2</name>
    <name type="ordered locus">Sfum_1935</name>
</gene>
<reference key="1">
    <citation type="submission" date="2006-10" db="EMBL/GenBank/DDBJ databases">
        <title>Complete sequence of Syntrophobacter fumaroxidans MPOB.</title>
        <authorList>
            <consortium name="US DOE Joint Genome Institute"/>
            <person name="Copeland A."/>
            <person name="Lucas S."/>
            <person name="Lapidus A."/>
            <person name="Barry K."/>
            <person name="Detter J.C."/>
            <person name="Glavina del Rio T."/>
            <person name="Hammon N."/>
            <person name="Israni S."/>
            <person name="Pitluck S."/>
            <person name="Goltsman E.G."/>
            <person name="Martinez M."/>
            <person name="Schmutz J."/>
            <person name="Larimer F."/>
            <person name="Land M."/>
            <person name="Hauser L."/>
            <person name="Kyrpides N."/>
            <person name="Kim E."/>
            <person name="Boone D.R."/>
            <person name="Brockman F."/>
            <person name="Culley D."/>
            <person name="Ferry J."/>
            <person name="Gunsalus R."/>
            <person name="McInerney M.J."/>
            <person name="Morrison M."/>
            <person name="Plugge C."/>
            <person name="Rohlin L."/>
            <person name="Scholten J."/>
            <person name="Sieber J."/>
            <person name="Stams A.J.M."/>
            <person name="Worm P."/>
            <person name="Henstra A.M."/>
            <person name="Richardson P."/>
        </authorList>
    </citation>
    <scope>NUCLEOTIDE SEQUENCE [LARGE SCALE GENOMIC DNA]</scope>
    <source>
        <strain>DSM 10017 / MPOB</strain>
    </source>
</reference>
<comment type="function">
    <text evidence="1">NDH-1 shuttles electrons from NADH, via FMN and iron-sulfur (Fe-S) centers, to quinones in the respiratory chain. The immediate electron acceptor for the enzyme in this species is believed to be ubiquinone. Couples the redox reaction to proton translocation (for every two electrons transferred, four hydrogen ions are translocated across the cytoplasmic membrane), and thus conserves the redox energy in a proton gradient.</text>
</comment>
<comment type="catalytic activity">
    <reaction evidence="1">
        <text>a quinone + NADH + 5 H(+)(in) = a quinol + NAD(+) + 4 H(+)(out)</text>
        <dbReference type="Rhea" id="RHEA:57888"/>
        <dbReference type="ChEBI" id="CHEBI:15378"/>
        <dbReference type="ChEBI" id="CHEBI:24646"/>
        <dbReference type="ChEBI" id="CHEBI:57540"/>
        <dbReference type="ChEBI" id="CHEBI:57945"/>
        <dbReference type="ChEBI" id="CHEBI:132124"/>
    </reaction>
</comment>
<comment type="subunit">
    <text evidence="1">NDH-1 is composed of 14 different subunits. Subunits NuoA, H, J, K, L, M, N constitute the membrane sector of the complex.</text>
</comment>
<comment type="subcellular location">
    <subcellularLocation>
        <location evidence="1">Cell inner membrane</location>
        <topology evidence="1">Multi-pass membrane protein</topology>
    </subcellularLocation>
</comment>
<comment type="similarity">
    <text evidence="1">Belongs to the complex I subunit 2 family.</text>
</comment>
<keyword id="KW-0997">Cell inner membrane</keyword>
<keyword id="KW-1003">Cell membrane</keyword>
<keyword id="KW-0472">Membrane</keyword>
<keyword id="KW-0520">NAD</keyword>
<keyword id="KW-0874">Quinone</keyword>
<keyword id="KW-1185">Reference proteome</keyword>
<keyword id="KW-1278">Translocase</keyword>
<keyword id="KW-0812">Transmembrane</keyword>
<keyword id="KW-1133">Transmembrane helix</keyword>
<keyword id="KW-0813">Transport</keyword>
<keyword id="KW-0830">Ubiquinone</keyword>
<accession>A0LJL8</accession>
<feature type="chain" id="PRO_5000166272" description="NADH-quinone oxidoreductase subunit N 2">
    <location>
        <begin position="1"/>
        <end position="472"/>
    </location>
</feature>
<feature type="transmembrane region" description="Helical" evidence="1">
    <location>
        <begin position="3"/>
        <end position="23"/>
    </location>
</feature>
<feature type="transmembrane region" description="Helical" evidence="1">
    <location>
        <begin position="34"/>
        <end position="54"/>
    </location>
</feature>
<feature type="transmembrane region" description="Helical" evidence="1">
    <location>
        <begin position="67"/>
        <end position="87"/>
    </location>
</feature>
<feature type="transmembrane region" description="Helical" evidence="1">
    <location>
        <begin position="106"/>
        <end position="126"/>
    </location>
</feature>
<feature type="transmembrane region" description="Helical" evidence="1">
    <location>
        <begin position="156"/>
        <end position="176"/>
    </location>
</feature>
<feature type="transmembrane region" description="Helical" evidence="1">
    <location>
        <begin position="198"/>
        <end position="218"/>
    </location>
</feature>
<feature type="transmembrane region" description="Helical" evidence="1">
    <location>
        <begin position="233"/>
        <end position="253"/>
    </location>
</feature>
<feature type="transmembrane region" description="Helical" evidence="1">
    <location>
        <begin position="263"/>
        <end position="283"/>
    </location>
</feature>
<feature type="transmembrane region" description="Helical" evidence="1">
    <location>
        <begin position="291"/>
        <end position="311"/>
    </location>
</feature>
<feature type="transmembrane region" description="Helical" evidence="1">
    <location>
        <begin position="317"/>
        <end position="337"/>
    </location>
</feature>
<feature type="transmembrane region" description="Helical" evidence="1">
    <location>
        <begin position="360"/>
        <end position="380"/>
    </location>
</feature>
<feature type="transmembrane region" description="Helical" evidence="1">
    <location>
        <begin position="398"/>
        <end position="418"/>
    </location>
</feature>
<feature type="transmembrane region" description="Helical" evidence="1">
    <location>
        <begin position="441"/>
        <end position="461"/>
    </location>
</feature>
<evidence type="ECO:0000255" key="1">
    <source>
        <dbReference type="HAMAP-Rule" id="MF_00445"/>
    </source>
</evidence>
<name>NUON2_SYNFM</name>
<proteinExistence type="inferred from homology"/>
<dbReference type="EC" id="7.1.1.-" evidence="1"/>
<dbReference type="EMBL" id="CP000478">
    <property type="protein sequence ID" value="ABK17620.1"/>
    <property type="molecule type" value="Genomic_DNA"/>
</dbReference>
<dbReference type="RefSeq" id="WP_011698790.1">
    <property type="nucleotide sequence ID" value="NC_008554.1"/>
</dbReference>
<dbReference type="SMR" id="A0LJL8"/>
<dbReference type="FunCoup" id="A0LJL8">
    <property type="interactions" value="142"/>
</dbReference>
<dbReference type="STRING" id="335543.Sfum_1935"/>
<dbReference type="KEGG" id="sfu:Sfum_1935"/>
<dbReference type="eggNOG" id="COG1007">
    <property type="taxonomic scope" value="Bacteria"/>
</dbReference>
<dbReference type="HOGENOM" id="CLU_007100_1_5_7"/>
<dbReference type="InParanoid" id="A0LJL8"/>
<dbReference type="OrthoDB" id="9805769at2"/>
<dbReference type="Proteomes" id="UP000001784">
    <property type="component" value="Chromosome"/>
</dbReference>
<dbReference type="GO" id="GO:0005886">
    <property type="term" value="C:plasma membrane"/>
    <property type="evidence" value="ECO:0007669"/>
    <property type="project" value="UniProtKB-SubCell"/>
</dbReference>
<dbReference type="GO" id="GO:0008137">
    <property type="term" value="F:NADH dehydrogenase (ubiquinone) activity"/>
    <property type="evidence" value="ECO:0007669"/>
    <property type="project" value="InterPro"/>
</dbReference>
<dbReference type="GO" id="GO:0050136">
    <property type="term" value="F:NADH:ubiquinone reductase (non-electrogenic) activity"/>
    <property type="evidence" value="ECO:0007669"/>
    <property type="project" value="UniProtKB-UniRule"/>
</dbReference>
<dbReference type="GO" id="GO:0048038">
    <property type="term" value="F:quinone binding"/>
    <property type="evidence" value="ECO:0007669"/>
    <property type="project" value="UniProtKB-KW"/>
</dbReference>
<dbReference type="GO" id="GO:0042773">
    <property type="term" value="P:ATP synthesis coupled electron transport"/>
    <property type="evidence" value="ECO:0007669"/>
    <property type="project" value="InterPro"/>
</dbReference>
<dbReference type="HAMAP" id="MF_00445">
    <property type="entry name" value="NDH1_NuoN_1"/>
    <property type="match status" value="1"/>
</dbReference>
<dbReference type="InterPro" id="IPR010096">
    <property type="entry name" value="NADH-Q_OxRdtase_suN/2"/>
</dbReference>
<dbReference type="InterPro" id="IPR001750">
    <property type="entry name" value="ND/Mrp_TM"/>
</dbReference>
<dbReference type="NCBIfam" id="TIGR01770">
    <property type="entry name" value="NDH_I_N"/>
    <property type="match status" value="1"/>
</dbReference>
<dbReference type="PANTHER" id="PTHR22773">
    <property type="entry name" value="NADH DEHYDROGENASE"/>
    <property type="match status" value="1"/>
</dbReference>
<dbReference type="Pfam" id="PF00361">
    <property type="entry name" value="Proton_antipo_M"/>
    <property type="match status" value="1"/>
</dbReference>
<sequence length="472" mass="50331">MNWMSFAPELITLTSALWFLLLSMTARSDPKREHVAALVLSALGLAACLASVGAEGYCFAGAYKVDLFSQVFKVLLAAGLFLIVTLCGELSDIEERNRREFYVLLFVCTLAMMLLVGANHFLVVFISLELSSYSLYVLVALRRDRGLGLEAGIKYFLVGIFASGVMIFGLALLYGASGIAALDGMARVLPGIIHQPAVVIGLLLTLSGFFFKLAVFPFHFWAPDAYQGAANQVSAYIATASKVAAIGVLVRVIASAGDGGTYLVHVLAVLSVVSMTVGNLAAIAQQDLKRLLAYSTVAHAGYVLIGVLSMNPAGYSAAVFYAFALLVMKFTAFLVLVEVASDGGNLRVEELAGLHRRSPILALALMVSLFSLAGIPPTVGFTGKFLVFVAAMGEGHFTLVLIAMINVVISLYYYLLVIKAAYLLEPRQELPALRVSPPLKLLSGVLVIAMVAAGFFPNQIIRVAESAAKALL</sequence>
<protein>
    <recommendedName>
        <fullName evidence="1">NADH-quinone oxidoreductase subunit N 2</fullName>
        <ecNumber evidence="1">7.1.1.-</ecNumber>
    </recommendedName>
    <alternativeName>
        <fullName evidence="1">NADH dehydrogenase I subunit N 2</fullName>
    </alternativeName>
    <alternativeName>
        <fullName evidence="1">NDH-1 subunit N 2</fullName>
    </alternativeName>
</protein>